<sequence length="210" mass="21913">MLLSVVAIALLAYLLGSFPAGYLAGRWLKGIDIRKEGSGSTGATNVLRVLGKGPALVVFITDILKGVLAVVAARAIASTNGLDPSAIAWLAAFAAIIAVVGHSLPVWLSFRGGKSVATSLGVLLALSPVVGLSGFGAFLLLLALFRIVSLGSIAGAITVIVLMLILPEPLPNKILGIASGIYVIYRHRSNLDRLRRGEEPRIGQRLSTNR</sequence>
<evidence type="ECO:0000255" key="1">
    <source>
        <dbReference type="HAMAP-Rule" id="MF_01043"/>
    </source>
</evidence>
<keyword id="KW-0997">Cell inner membrane</keyword>
<keyword id="KW-1003">Cell membrane</keyword>
<keyword id="KW-0444">Lipid biosynthesis</keyword>
<keyword id="KW-0443">Lipid metabolism</keyword>
<keyword id="KW-0472">Membrane</keyword>
<keyword id="KW-0594">Phospholipid biosynthesis</keyword>
<keyword id="KW-1208">Phospholipid metabolism</keyword>
<keyword id="KW-1185">Reference proteome</keyword>
<keyword id="KW-0808">Transferase</keyword>
<keyword id="KW-0812">Transmembrane</keyword>
<keyword id="KW-1133">Transmembrane helix</keyword>
<protein>
    <recommendedName>
        <fullName evidence="1">Glycerol-3-phosphate acyltransferase</fullName>
    </recommendedName>
    <alternativeName>
        <fullName evidence="1">Acyl-PO4 G3P acyltransferase</fullName>
    </alternativeName>
    <alternativeName>
        <fullName evidence="1">Acyl-phosphate--glycerol-3-phosphate acyltransferase</fullName>
    </alternativeName>
    <alternativeName>
        <fullName evidence="1">G3P acyltransferase</fullName>
        <shortName evidence="1">GPAT</shortName>
        <ecNumber evidence="1">2.3.1.275</ecNumber>
    </alternativeName>
    <alternativeName>
        <fullName evidence="1">Lysophosphatidic acid synthase</fullName>
        <shortName evidence="1">LPA synthase</shortName>
    </alternativeName>
</protein>
<dbReference type="EC" id="2.3.1.275" evidence="1"/>
<dbReference type="EMBL" id="CP000100">
    <property type="protein sequence ID" value="ABB58087.1"/>
    <property type="molecule type" value="Genomic_DNA"/>
</dbReference>
<dbReference type="RefSeq" id="WP_011244346.1">
    <property type="nucleotide sequence ID" value="NZ_JACJTX010000001.1"/>
</dbReference>
<dbReference type="SMR" id="Q31LI2"/>
<dbReference type="STRING" id="1140.Synpcc7942_2057"/>
<dbReference type="PaxDb" id="1140-Synpcc7942_2057"/>
<dbReference type="GeneID" id="72430933"/>
<dbReference type="KEGG" id="syf:Synpcc7942_2057"/>
<dbReference type="eggNOG" id="COG0344">
    <property type="taxonomic scope" value="Bacteria"/>
</dbReference>
<dbReference type="HOGENOM" id="CLU_081254_7_1_3"/>
<dbReference type="OrthoDB" id="9777124at2"/>
<dbReference type="BioCyc" id="SYNEL:SYNPCC7942_2057-MONOMER"/>
<dbReference type="UniPathway" id="UPA00085"/>
<dbReference type="Proteomes" id="UP000889800">
    <property type="component" value="Chromosome"/>
</dbReference>
<dbReference type="GO" id="GO:0005886">
    <property type="term" value="C:plasma membrane"/>
    <property type="evidence" value="ECO:0007669"/>
    <property type="project" value="UniProtKB-SubCell"/>
</dbReference>
<dbReference type="GO" id="GO:0043772">
    <property type="term" value="F:acyl-phosphate glycerol-3-phosphate acyltransferase activity"/>
    <property type="evidence" value="ECO:0007669"/>
    <property type="project" value="UniProtKB-UniRule"/>
</dbReference>
<dbReference type="GO" id="GO:0008654">
    <property type="term" value="P:phospholipid biosynthetic process"/>
    <property type="evidence" value="ECO:0007669"/>
    <property type="project" value="UniProtKB-UniRule"/>
</dbReference>
<dbReference type="HAMAP" id="MF_01043">
    <property type="entry name" value="PlsY"/>
    <property type="match status" value="1"/>
</dbReference>
<dbReference type="InterPro" id="IPR003811">
    <property type="entry name" value="G3P_acylTferase_PlsY"/>
</dbReference>
<dbReference type="NCBIfam" id="TIGR00023">
    <property type="entry name" value="glycerol-3-phosphate 1-O-acyltransferase PlsY"/>
    <property type="match status" value="1"/>
</dbReference>
<dbReference type="PANTHER" id="PTHR30309:SF0">
    <property type="entry name" value="GLYCEROL-3-PHOSPHATE ACYLTRANSFERASE-RELATED"/>
    <property type="match status" value="1"/>
</dbReference>
<dbReference type="PANTHER" id="PTHR30309">
    <property type="entry name" value="INNER MEMBRANE PROTEIN YGIH"/>
    <property type="match status" value="1"/>
</dbReference>
<dbReference type="Pfam" id="PF02660">
    <property type="entry name" value="G3P_acyltransf"/>
    <property type="match status" value="1"/>
</dbReference>
<dbReference type="SMART" id="SM01207">
    <property type="entry name" value="G3P_acyltransf"/>
    <property type="match status" value="1"/>
</dbReference>
<accession>Q31LI2</accession>
<name>PLSY_SYNE7</name>
<gene>
    <name evidence="1" type="primary">plsY</name>
    <name type="ordered locus">Synpcc7942_2057</name>
</gene>
<feature type="chain" id="PRO_0000250343" description="Glycerol-3-phosphate acyltransferase">
    <location>
        <begin position="1"/>
        <end position="210"/>
    </location>
</feature>
<feature type="transmembrane region" description="Helical" evidence="1">
    <location>
        <begin position="1"/>
        <end position="21"/>
    </location>
</feature>
<feature type="transmembrane region" description="Helical" evidence="1">
    <location>
        <begin position="53"/>
        <end position="73"/>
    </location>
</feature>
<feature type="transmembrane region" description="Helical" evidence="1">
    <location>
        <begin position="87"/>
        <end position="107"/>
    </location>
</feature>
<feature type="transmembrane region" description="Helical" evidence="1">
    <location>
        <begin position="122"/>
        <end position="142"/>
    </location>
</feature>
<feature type="transmembrane region" description="Helical" evidence="1">
    <location>
        <begin position="147"/>
        <end position="167"/>
    </location>
</feature>
<organism>
    <name type="scientific">Synechococcus elongatus (strain ATCC 33912 / PCC 7942 / FACHB-805)</name>
    <name type="common">Anacystis nidulans R2</name>
    <dbReference type="NCBI Taxonomy" id="1140"/>
    <lineage>
        <taxon>Bacteria</taxon>
        <taxon>Bacillati</taxon>
        <taxon>Cyanobacteriota</taxon>
        <taxon>Cyanophyceae</taxon>
        <taxon>Synechococcales</taxon>
        <taxon>Synechococcaceae</taxon>
        <taxon>Synechococcus</taxon>
    </lineage>
</organism>
<reference key="1">
    <citation type="submission" date="2005-08" db="EMBL/GenBank/DDBJ databases">
        <title>Complete sequence of chromosome 1 of Synechococcus elongatus PCC 7942.</title>
        <authorList>
            <consortium name="US DOE Joint Genome Institute"/>
            <person name="Copeland A."/>
            <person name="Lucas S."/>
            <person name="Lapidus A."/>
            <person name="Barry K."/>
            <person name="Detter J.C."/>
            <person name="Glavina T."/>
            <person name="Hammon N."/>
            <person name="Israni S."/>
            <person name="Pitluck S."/>
            <person name="Schmutz J."/>
            <person name="Larimer F."/>
            <person name="Land M."/>
            <person name="Kyrpides N."/>
            <person name="Lykidis A."/>
            <person name="Golden S."/>
            <person name="Richardson P."/>
        </authorList>
    </citation>
    <scope>NUCLEOTIDE SEQUENCE [LARGE SCALE GENOMIC DNA]</scope>
    <source>
        <strain>ATCC 33912 / PCC 7942 / FACHB-805</strain>
    </source>
</reference>
<comment type="function">
    <text evidence="1">Catalyzes the transfer of an acyl group from acyl-phosphate (acyl-PO(4)) to glycerol-3-phosphate (G3P) to form lysophosphatidic acid (LPA). This enzyme utilizes acyl-phosphate as fatty acyl donor, but not acyl-CoA or acyl-ACP.</text>
</comment>
<comment type="catalytic activity">
    <reaction evidence="1">
        <text>an acyl phosphate + sn-glycerol 3-phosphate = a 1-acyl-sn-glycero-3-phosphate + phosphate</text>
        <dbReference type="Rhea" id="RHEA:34075"/>
        <dbReference type="ChEBI" id="CHEBI:43474"/>
        <dbReference type="ChEBI" id="CHEBI:57597"/>
        <dbReference type="ChEBI" id="CHEBI:57970"/>
        <dbReference type="ChEBI" id="CHEBI:59918"/>
        <dbReference type="EC" id="2.3.1.275"/>
    </reaction>
</comment>
<comment type="pathway">
    <text evidence="1">Lipid metabolism; phospholipid metabolism.</text>
</comment>
<comment type="subunit">
    <text evidence="1">Probably interacts with PlsX.</text>
</comment>
<comment type="subcellular location">
    <subcellularLocation>
        <location evidence="1">Cell inner membrane</location>
        <topology evidence="1">Multi-pass membrane protein</topology>
    </subcellularLocation>
</comment>
<comment type="similarity">
    <text evidence="1">Belongs to the PlsY family.</text>
</comment>
<proteinExistence type="inferred from homology"/>